<reference key="1">
    <citation type="submission" date="2008-05" db="EMBL/GenBank/DDBJ databases">
        <title>Complete genome sequence of Clostridium botulinum E3 str. Alaska E43.</title>
        <authorList>
            <person name="Brinkac L.M."/>
            <person name="Brown J.L."/>
            <person name="Bruce D."/>
            <person name="Detter C."/>
            <person name="Munk C."/>
            <person name="Smith L.A."/>
            <person name="Smith T.J."/>
            <person name="Sutton G."/>
            <person name="Brettin T.S."/>
        </authorList>
    </citation>
    <scope>NUCLEOTIDE SEQUENCE [LARGE SCALE GENOMIC DNA]</scope>
    <source>
        <strain>Alaska E43 / Type E3</strain>
    </source>
</reference>
<feature type="chain" id="PRO_1000089074" description="Argininosuccinate lyase">
    <location>
        <begin position="1"/>
        <end position="465"/>
    </location>
</feature>
<accession>B2UYI1</accession>
<comment type="catalytic activity">
    <reaction evidence="1">
        <text>2-(N(omega)-L-arginino)succinate = fumarate + L-arginine</text>
        <dbReference type="Rhea" id="RHEA:24020"/>
        <dbReference type="ChEBI" id="CHEBI:29806"/>
        <dbReference type="ChEBI" id="CHEBI:32682"/>
        <dbReference type="ChEBI" id="CHEBI:57472"/>
        <dbReference type="EC" id="4.3.2.1"/>
    </reaction>
</comment>
<comment type="pathway">
    <text evidence="1">Amino-acid biosynthesis; L-arginine biosynthesis; L-arginine from L-ornithine and carbamoyl phosphate: step 3/3.</text>
</comment>
<comment type="subcellular location">
    <subcellularLocation>
        <location evidence="1">Cytoplasm</location>
    </subcellularLocation>
</comment>
<comment type="similarity">
    <text evidence="1">Belongs to the lyase 1 family. Argininosuccinate lyase subfamily.</text>
</comment>
<proteinExistence type="inferred from homology"/>
<evidence type="ECO:0000255" key="1">
    <source>
        <dbReference type="HAMAP-Rule" id="MF_00006"/>
    </source>
</evidence>
<organism>
    <name type="scientific">Clostridium botulinum (strain Alaska E43 / Type E3)</name>
    <dbReference type="NCBI Taxonomy" id="508767"/>
    <lineage>
        <taxon>Bacteria</taxon>
        <taxon>Bacillati</taxon>
        <taxon>Bacillota</taxon>
        <taxon>Clostridia</taxon>
        <taxon>Eubacteriales</taxon>
        <taxon>Clostridiaceae</taxon>
        <taxon>Clostridium</taxon>
    </lineage>
</organism>
<sequence length="465" mass="52848">MKLWGGRFKKGTDELVNDFNSSINIDSRMYKEDIEGSLAHASMLGEQNIISKEDSLKITSGLLEILKRMDNDVINIDLTSEDIHSFVESTLTYYIGEYGKMLHTARSRNDQVTLDLKLYLKKALVKLRKDILYLEEVLLEKSKEHISTIMPGYTHMQKAQPITLSHHLLAYAEMFKRDIGRINDAYKRTDEMPLGSGALATSTYPIDRYMVAKDLGFSKITLNSLDSVSDRDYVIETLSALSLIMMHLSRFSEEIILWCTGEFNFVELDDSYSTGSSIMPQKKNPDVAELIRGKTGRVYGDLITLLTVMKGIPLAYNKDMQEDKEALFDALDTVTLSLKTFAGMIKTMKINKDNMKKSAALGFTNATDLADYLVKKGSYFRDAHGIVGQIVLQCIKDNKMIEDLTLAELKEYSPTFEEDVYDAINLYTCVEERKVIGGPSRESVKFQIKELQEFIHQFKGDEIYD</sequence>
<dbReference type="EC" id="4.3.2.1" evidence="1"/>
<dbReference type="EMBL" id="CP001078">
    <property type="protein sequence ID" value="ACD52561.1"/>
    <property type="molecule type" value="Genomic_DNA"/>
</dbReference>
<dbReference type="RefSeq" id="WP_012450681.1">
    <property type="nucleotide sequence ID" value="NC_010723.1"/>
</dbReference>
<dbReference type="SMR" id="B2UYI1"/>
<dbReference type="KEGG" id="cbt:CLH_2866"/>
<dbReference type="HOGENOM" id="CLU_027272_2_3_9"/>
<dbReference type="UniPathway" id="UPA00068">
    <property type="reaction ID" value="UER00114"/>
</dbReference>
<dbReference type="GO" id="GO:0005829">
    <property type="term" value="C:cytosol"/>
    <property type="evidence" value="ECO:0007669"/>
    <property type="project" value="TreeGrafter"/>
</dbReference>
<dbReference type="GO" id="GO:0004056">
    <property type="term" value="F:argininosuccinate lyase activity"/>
    <property type="evidence" value="ECO:0007669"/>
    <property type="project" value="UniProtKB-UniRule"/>
</dbReference>
<dbReference type="GO" id="GO:0042450">
    <property type="term" value="P:arginine biosynthetic process via ornithine"/>
    <property type="evidence" value="ECO:0007669"/>
    <property type="project" value="InterPro"/>
</dbReference>
<dbReference type="GO" id="GO:0006526">
    <property type="term" value="P:L-arginine biosynthetic process"/>
    <property type="evidence" value="ECO:0007669"/>
    <property type="project" value="UniProtKB-UniRule"/>
</dbReference>
<dbReference type="CDD" id="cd01359">
    <property type="entry name" value="Argininosuccinate_lyase"/>
    <property type="match status" value="1"/>
</dbReference>
<dbReference type="FunFam" id="1.10.40.30:FF:000001">
    <property type="entry name" value="Argininosuccinate lyase"/>
    <property type="match status" value="1"/>
</dbReference>
<dbReference type="FunFam" id="1.20.200.10:FF:000002">
    <property type="entry name" value="Argininosuccinate lyase"/>
    <property type="match status" value="1"/>
</dbReference>
<dbReference type="Gene3D" id="1.10.40.30">
    <property type="entry name" value="Fumarase/aspartase (C-terminal domain)"/>
    <property type="match status" value="1"/>
</dbReference>
<dbReference type="Gene3D" id="1.20.200.10">
    <property type="entry name" value="Fumarase/aspartase (Central domain)"/>
    <property type="match status" value="1"/>
</dbReference>
<dbReference type="Gene3D" id="1.10.275.10">
    <property type="entry name" value="Fumarase/aspartase (N-terminal domain)"/>
    <property type="match status" value="1"/>
</dbReference>
<dbReference type="HAMAP" id="MF_00006">
    <property type="entry name" value="Arg_succ_lyase"/>
    <property type="match status" value="1"/>
</dbReference>
<dbReference type="InterPro" id="IPR029419">
    <property type="entry name" value="Arg_succ_lyase_C"/>
</dbReference>
<dbReference type="InterPro" id="IPR009049">
    <property type="entry name" value="Argininosuccinate_lyase"/>
</dbReference>
<dbReference type="InterPro" id="IPR024083">
    <property type="entry name" value="Fumarase/histidase_N"/>
</dbReference>
<dbReference type="InterPro" id="IPR020557">
    <property type="entry name" value="Fumarate_lyase_CS"/>
</dbReference>
<dbReference type="InterPro" id="IPR000362">
    <property type="entry name" value="Fumarate_lyase_fam"/>
</dbReference>
<dbReference type="InterPro" id="IPR022761">
    <property type="entry name" value="Fumarate_lyase_N"/>
</dbReference>
<dbReference type="InterPro" id="IPR008948">
    <property type="entry name" value="L-Aspartase-like"/>
</dbReference>
<dbReference type="NCBIfam" id="TIGR00838">
    <property type="entry name" value="argH"/>
    <property type="match status" value="1"/>
</dbReference>
<dbReference type="PANTHER" id="PTHR43814">
    <property type="entry name" value="ARGININOSUCCINATE LYASE"/>
    <property type="match status" value="1"/>
</dbReference>
<dbReference type="PANTHER" id="PTHR43814:SF1">
    <property type="entry name" value="ARGININOSUCCINATE LYASE"/>
    <property type="match status" value="1"/>
</dbReference>
<dbReference type="Pfam" id="PF14698">
    <property type="entry name" value="ASL_C2"/>
    <property type="match status" value="1"/>
</dbReference>
<dbReference type="Pfam" id="PF00206">
    <property type="entry name" value="Lyase_1"/>
    <property type="match status" value="1"/>
</dbReference>
<dbReference type="PRINTS" id="PR00145">
    <property type="entry name" value="ARGSUCLYASE"/>
</dbReference>
<dbReference type="PRINTS" id="PR00149">
    <property type="entry name" value="FUMRATELYASE"/>
</dbReference>
<dbReference type="SUPFAM" id="SSF48557">
    <property type="entry name" value="L-aspartase-like"/>
    <property type="match status" value="1"/>
</dbReference>
<dbReference type="PROSITE" id="PS00163">
    <property type="entry name" value="FUMARATE_LYASES"/>
    <property type="match status" value="1"/>
</dbReference>
<name>ARLY_CLOBA</name>
<protein>
    <recommendedName>
        <fullName evidence="1">Argininosuccinate lyase</fullName>
        <shortName evidence="1">ASAL</shortName>
        <ecNumber evidence="1">4.3.2.1</ecNumber>
    </recommendedName>
    <alternativeName>
        <fullName evidence="1">Arginosuccinase</fullName>
    </alternativeName>
</protein>
<gene>
    <name evidence="1" type="primary">argH</name>
    <name type="ordered locus">CLH_2866</name>
</gene>
<keyword id="KW-0028">Amino-acid biosynthesis</keyword>
<keyword id="KW-0055">Arginine biosynthesis</keyword>
<keyword id="KW-0963">Cytoplasm</keyword>
<keyword id="KW-0456">Lyase</keyword>